<evidence type="ECO:0000255" key="1">
    <source>
        <dbReference type="HAMAP-Rule" id="MF_00318"/>
    </source>
</evidence>
<organism>
    <name type="scientific">Cupriavidus metallidurans (strain ATCC 43123 / DSM 2839 / NBRC 102507 / CH34)</name>
    <name type="common">Ralstonia metallidurans</name>
    <dbReference type="NCBI Taxonomy" id="266264"/>
    <lineage>
        <taxon>Bacteria</taxon>
        <taxon>Pseudomonadati</taxon>
        <taxon>Pseudomonadota</taxon>
        <taxon>Betaproteobacteria</taxon>
        <taxon>Burkholderiales</taxon>
        <taxon>Burkholderiaceae</taxon>
        <taxon>Cupriavidus</taxon>
    </lineage>
</organism>
<proteinExistence type="inferred from homology"/>
<gene>
    <name evidence="1" type="primary">eno2</name>
    <name type="ordered locus">Rmet_1176</name>
</gene>
<protein>
    <recommendedName>
        <fullName evidence="1">Enolase 2</fullName>
        <ecNumber evidence="1">4.2.1.11</ecNumber>
    </recommendedName>
    <alternativeName>
        <fullName evidence="1">2-phospho-D-glycerate hydro-lyase 2</fullName>
    </alternativeName>
    <alternativeName>
        <fullName evidence="1">2-phosphoglycerate dehydratase 2</fullName>
    </alternativeName>
</protein>
<accession>Q1LP64</accession>
<dbReference type="EC" id="4.2.1.11" evidence="1"/>
<dbReference type="EMBL" id="CP000352">
    <property type="protein sequence ID" value="ABF08062.1"/>
    <property type="molecule type" value="Genomic_DNA"/>
</dbReference>
<dbReference type="RefSeq" id="WP_011515956.1">
    <property type="nucleotide sequence ID" value="NC_007973.1"/>
</dbReference>
<dbReference type="SMR" id="Q1LP64"/>
<dbReference type="STRING" id="266264.Rmet_1176"/>
<dbReference type="KEGG" id="rme:Rmet_1176"/>
<dbReference type="eggNOG" id="COG0148">
    <property type="taxonomic scope" value="Bacteria"/>
</dbReference>
<dbReference type="HOGENOM" id="CLU_031223_2_1_4"/>
<dbReference type="UniPathway" id="UPA00109">
    <property type="reaction ID" value="UER00187"/>
</dbReference>
<dbReference type="Proteomes" id="UP000002429">
    <property type="component" value="Chromosome"/>
</dbReference>
<dbReference type="GO" id="GO:0009986">
    <property type="term" value="C:cell surface"/>
    <property type="evidence" value="ECO:0007669"/>
    <property type="project" value="UniProtKB-SubCell"/>
</dbReference>
<dbReference type="GO" id="GO:0005576">
    <property type="term" value="C:extracellular region"/>
    <property type="evidence" value="ECO:0007669"/>
    <property type="project" value="UniProtKB-SubCell"/>
</dbReference>
<dbReference type="GO" id="GO:0000015">
    <property type="term" value="C:phosphopyruvate hydratase complex"/>
    <property type="evidence" value="ECO:0007669"/>
    <property type="project" value="InterPro"/>
</dbReference>
<dbReference type="GO" id="GO:0000287">
    <property type="term" value="F:magnesium ion binding"/>
    <property type="evidence" value="ECO:0007669"/>
    <property type="project" value="UniProtKB-UniRule"/>
</dbReference>
<dbReference type="GO" id="GO:0004634">
    <property type="term" value="F:phosphopyruvate hydratase activity"/>
    <property type="evidence" value="ECO:0007669"/>
    <property type="project" value="UniProtKB-UniRule"/>
</dbReference>
<dbReference type="GO" id="GO:0006096">
    <property type="term" value="P:glycolytic process"/>
    <property type="evidence" value="ECO:0007669"/>
    <property type="project" value="UniProtKB-UniRule"/>
</dbReference>
<dbReference type="CDD" id="cd03313">
    <property type="entry name" value="enolase"/>
    <property type="match status" value="1"/>
</dbReference>
<dbReference type="FunFam" id="3.30.390.10:FF:000001">
    <property type="entry name" value="Enolase"/>
    <property type="match status" value="1"/>
</dbReference>
<dbReference type="Gene3D" id="3.20.20.120">
    <property type="entry name" value="Enolase-like C-terminal domain"/>
    <property type="match status" value="1"/>
</dbReference>
<dbReference type="Gene3D" id="3.30.390.10">
    <property type="entry name" value="Enolase-like, N-terminal domain"/>
    <property type="match status" value="1"/>
</dbReference>
<dbReference type="HAMAP" id="MF_00318">
    <property type="entry name" value="Enolase"/>
    <property type="match status" value="1"/>
</dbReference>
<dbReference type="InterPro" id="IPR000941">
    <property type="entry name" value="Enolase"/>
</dbReference>
<dbReference type="InterPro" id="IPR036849">
    <property type="entry name" value="Enolase-like_C_sf"/>
</dbReference>
<dbReference type="InterPro" id="IPR029017">
    <property type="entry name" value="Enolase-like_N"/>
</dbReference>
<dbReference type="InterPro" id="IPR020810">
    <property type="entry name" value="Enolase_C"/>
</dbReference>
<dbReference type="InterPro" id="IPR020811">
    <property type="entry name" value="Enolase_N"/>
</dbReference>
<dbReference type="NCBIfam" id="TIGR01060">
    <property type="entry name" value="eno"/>
    <property type="match status" value="1"/>
</dbReference>
<dbReference type="PANTHER" id="PTHR11902">
    <property type="entry name" value="ENOLASE"/>
    <property type="match status" value="1"/>
</dbReference>
<dbReference type="PANTHER" id="PTHR11902:SF1">
    <property type="entry name" value="ENOLASE"/>
    <property type="match status" value="1"/>
</dbReference>
<dbReference type="Pfam" id="PF00113">
    <property type="entry name" value="Enolase_C"/>
    <property type="match status" value="1"/>
</dbReference>
<dbReference type="Pfam" id="PF03952">
    <property type="entry name" value="Enolase_N"/>
    <property type="match status" value="1"/>
</dbReference>
<dbReference type="PIRSF" id="PIRSF001400">
    <property type="entry name" value="Enolase"/>
    <property type="match status" value="1"/>
</dbReference>
<dbReference type="PRINTS" id="PR00148">
    <property type="entry name" value="ENOLASE"/>
</dbReference>
<dbReference type="SFLD" id="SFLDF00002">
    <property type="entry name" value="enolase"/>
    <property type="match status" value="1"/>
</dbReference>
<dbReference type="SFLD" id="SFLDG00178">
    <property type="entry name" value="enolase"/>
    <property type="match status" value="1"/>
</dbReference>
<dbReference type="SMART" id="SM01192">
    <property type="entry name" value="Enolase_C"/>
    <property type="match status" value="1"/>
</dbReference>
<dbReference type="SMART" id="SM01193">
    <property type="entry name" value="Enolase_N"/>
    <property type="match status" value="1"/>
</dbReference>
<dbReference type="SUPFAM" id="SSF51604">
    <property type="entry name" value="Enolase C-terminal domain-like"/>
    <property type="match status" value="1"/>
</dbReference>
<dbReference type="SUPFAM" id="SSF54826">
    <property type="entry name" value="Enolase N-terminal domain-like"/>
    <property type="match status" value="1"/>
</dbReference>
<feature type="chain" id="PRO_0000267085" description="Enolase 2">
    <location>
        <begin position="1"/>
        <end position="425"/>
    </location>
</feature>
<feature type="active site" description="Proton donor" evidence="1">
    <location>
        <position position="205"/>
    </location>
</feature>
<feature type="active site" description="Proton acceptor" evidence="1">
    <location>
        <position position="337"/>
    </location>
</feature>
<feature type="binding site" evidence="1">
    <location>
        <position position="163"/>
    </location>
    <ligand>
        <name>(2R)-2-phosphoglycerate</name>
        <dbReference type="ChEBI" id="CHEBI:58289"/>
    </ligand>
</feature>
<feature type="binding site" evidence="1">
    <location>
        <position position="242"/>
    </location>
    <ligand>
        <name>Mg(2+)</name>
        <dbReference type="ChEBI" id="CHEBI:18420"/>
    </ligand>
</feature>
<feature type="binding site" evidence="1">
    <location>
        <position position="285"/>
    </location>
    <ligand>
        <name>Mg(2+)</name>
        <dbReference type="ChEBI" id="CHEBI:18420"/>
    </ligand>
</feature>
<feature type="binding site" evidence="1">
    <location>
        <position position="312"/>
    </location>
    <ligand>
        <name>Mg(2+)</name>
        <dbReference type="ChEBI" id="CHEBI:18420"/>
    </ligand>
</feature>
<feature type="binding site" evidence="1">
    <location>
        <position position="337"/>
    </location>
    <ligand>
        <name>(2R)-2-phosphoglycerate</name>
        <dbReference type="ChEBI" id="CHEBI:58289"/>
    </ligand>
</feature>
<feature type="binding site" evidence="1">
    <location>
        <position position="366"/>
    </location>
    <ligand>
        <name>(2R)-2-phosphoglycerate</name>
        <dbReference type="ChEBI" id="CHEBI:58289"/>
    </ligand>
</feature>
<feature type="binding site" evidence="1">
    <location>
        <position position="367"/>
    </location>
    <ligand>
        <name>(2R)-2-phosphoglycerate</name>
        <dbReference type="ChEBI" id="CHEBI:58289"/>
    </ligand>
</feature>
<feature type="binding site" evidence="1">
    <location>
        <position position="388"/>
    </location>
    <ligand>
        <name>(2R)-2-phosphoglycerate</name>
        <dbReference type="ChEBI" id="CHEBI:58289"/>
    </ligand>
</feature>
<reference key="1">
    <citation type="journal article" date="2010" name="PLoS ONE">
        <title>The complete genome sequence of Cupriavidus metallidurans strain CH34, a master survivalist in harsh and anthropogenic environments.</title>
        <authorList>
            <person name="Janssen P.J."/>
            <person name="Van Houdt R."/>
            <person name="Moors H."/>
            <person name="Monsieurs P."/>
            <person name="Morin N."/>
            <person name="Michaux A."/>
            <person name="Benotmane M.A."/>
            <person name="Leys N."/>
            <person name="Vallaeys T."/>
            <person name="Lapidus A."/>
            <person name="Monchy S."/>
            <person name="Medigue C."/>
            <person name="Taghavi S."/>
            <person name="McCorkle S."/>
            <person name="Dunn J."/>
            <person name="van der Lelie D."/>
            <person name="Mergeay M."/>
        </authorList>
    </citation>
    <scope>NUCLEOTIDE SEQUENCE [LARGE SCALE GENOMIC DNA]</scope>
    <source>
        <strain>ATCC 43123 / DSM 2839 / NBRC 102507 / CH34</strain>
    </source>
</reference>
<name>ENO2_CUPMC</name>
<sequence>MSKVAEIRGLEVLDSRGNPTVEVEVVLDDGAVGRAIVPSGASTGAREAVELRDADPRRYLGRGVLRAVQAVNTELCEALLGRDAGDQPEIDTIMIDLDGTPDKRRLGANALLGVSLAVAHAAAMSNGLPLFAYLGGERASLLPVPLINVINGGAHADNALDFQEFMIVPAGAPTFTEAVRASAEVFHTLRAMLKAAGYTTNVGDEGGFAPEFHAAEEALDILVAAIAKAGYRPGEDIALAIDPAASELYVNGSYVYQGEGVERSREEQVAYLVRLADRYPIVSIEDGMAEDDAMGWQLLTRQLGKRCQLVGDDVFCTHPTLLRQGVEQGMANAILVKANQIGTLSEMRETVRVAHGYAYSAVMSHRSGETEDVTIADLAVALRCGQIKTGSMSRADRTAKYNRLLRIERELGSRAEYAGALLRRR</sequence>
<comment type="function">
    <text evidence="1">Catalyzes the reversible conversion of 2-phosphoglycerate (2-PG) into phosphoenolpyruvate (PEP). It is essential for the degradation of carbohydrates via glycolysis.</text>
</comment>
<comment type="catalytic activity">
    <reaction evidence="1">
        <text>(2R)-2-phosphoglycerate = phosphoenolpyruvate + H2O</text>
        <dbReference type="Rhea" id="RHEA:10164"/>
        <dbReference type="ChEBI" id="CHEBI:15377"/>
        <dbReference type="ChEBI" id="CHEBI:58289"/>
        <dbReference type="ChEBI" id="CHEBI:58702"/>
        <dbReference type="EC" id="4.2.1.11"/>
    </reaction>
</comment>
<comment type="cofactor">
    <cofactor evidence="1">
        <name>Mg(2+)</name>
        <dbReference type="ChEBI" id="CHEBI:18420"/>
    </cofactor>
    <text evidence="1">Binds a second Mg(2+) ion via substrate during catalysis.</text>
</comment>
<comment type="pathway">
    <text evidence="1">Carbohydrate degradation; glycolysis; pyruvate from D-glyceraldehyde 3-phosphate: step 4/5.</text>
</comment>
<comment type="subcellular location">
    <subcellularLocation>
        <location evidence="1">Cytoplasm</location>
    </subcellularLocation>
    <subcellularLocation>
        <location evidence="1">Secreted</location>
    </subcellularLocation>
    <subcellularLocation>
        <location evidence="1">Cell surface</location>
    </subcellularLocation>
    <text evidence="1">Fractions of enolase are present in both the cytoplasm and on the cell surface.</text>
</comment>
<comment type="similarity">
    <text evidence="1">Belongs to the enolase family.</text>
</comment>
<keyword id="KW-0963">Cytoplasm</keyword>
<keyword id="KW-0324">Glycolysis</keyword>
<keyword id="KW-0456">Lyase</keyword>
<keyword id="KW-0460">Magnesium</keyword>
<keyword id="KW-0479">Metal-binding</keyword>
<keyword id="KW-1185">Reference proteome</keyword>
<keyword id="KW-0964">Secreted</keyword>